<protein>
    <recommendedName>
        <fullName evidence="4">Siroheme decarboxylase NirD subunit</fullName>
        <ecNumber evidence="1">4.1.1.111</ecNumber>
    </recommendedName>
</protein>
<reference key="1">
    <citation type="journal article" date="1997" name="J. Bacteriol.">
        <title>Gene cluster for dissimilatory nitrite reductase (nir) from Pseudomonas aeruginosa: sequencing and identification of a locus for heme d1 biosynthesis.</title>
        <authorList>
            <person name="Kawasaki S."/>
            <person name="Arai H."/>
            <person name="Kodama T."/>
            <person name="Igarashi Y."/>
        </authorList>
    </citation>
    <scope>NUCLEOTIDE SEQUENCE [GENOMIC DNA]</scope>
    <scope>FUNCTION</scope>
    <scope>PATHWAY</scope>
    <scope>DISRUPTION PHENOTYPE</scope>
    <source>
        <strain>ATCC 15692 / DSM 22644 / CIP 104116 / JCM 14847 / LMG 12228 / 1C / PRS 101 / PAO1</strain>
    </source>
</reference>
<reference key="2">
    <citation type="journal article" date="2000" name="Nature">
        <title>Complete genome sequence of Pseudomonas aeruginosa PAO1, an opportunistic pathogen.</title>
        <authorList>
            <person name="Stover C.K."/>
            <person name="Pham X.-Q.T."/>
            <person name="Erwin A.L."/>
            <person name="Mizoguchi S.D."/>
            <person name="Warrener P."/>
            <person name="Hickey M.J."/>
            <person name="Brinkman F.S.L."/>
            <person name="Hufnagle W.O."/>
            <person name="Kowalik D.J."/>
            <person name="Lagrou M."/>
            <person name="Garber R.L."/>
            <person name="Goltry L."/>
            <person name="Tolentino E."/>
            <person name="Westbrock-Wadman S."/>
            <person name="Yuan Y."/>
            <person name="Brody L.L."/>
            <person name="Coulter S.N."/>
            <person name="Folger K.R."/>
            <person name="Kas A."/>
            <person name="Larbig K."/>
            <person name="Lim R.M."/>
            <person name="Smith K.A."/>
            <person name="Spencer D.H."/>
            <person name="Wong G.K.-S."/>
            <person name="Wu Z."/>
            <person name="Paulsen I.T."/>
            <person name="Reizer J."/>
            <person name="Saier M.H. Jr."/>
            <person name="Hancock R.E.W."/>
            <person name="Lory S."/>
            <person name="Olson M.V."/>
        </authorList>
    </citation>
    <scope>NUCLEOTIDE SEQUENCE [LARGE SCALE GENOMIC DNA]</scope>
    <source>
        <strain>ATCC 15692 / DSM 22644 / CIP 104116 / JCM 14847 / LMG 12228 / 1C / PRS 101 / PAO1</strain>
    </source>
</reference>
<comment type="function">
    <text evidence="1 2">Involved in heme d1 biosynthesis (PubMed:8982003). Catalyzes the decarboxylation of siroheme into didecarboxysiroheme (By similarity).</text>
</comment>
<comment type="catalytic activity">
    <reaction evidence="1">
        <text>siroheme + 2 H(+) = 12,18-didecarboxysiroheme + 2 CO2</text>
        <dbReference type="Rhea" id="RHEA:19093"/>
        <dbReference type="ChEBI" id="CHEBI:15378"/>
        <dbReference type="ChEBI" id="CHEBI:16526"/>
        <dbReference type="ChEBI" id="CHEBI:60052"/>
        <dbReference type="ChEBI" id="CHEBI:140497"/>
        <dbReference type="EC" id="4.1.1.111"/>
    </reaction>
</comment>
<comment type="pathway">
    <text evidence="5">Porphyrin-containing compound metabolism.</text>
</comment>
<comment type="subunit">
    <text evidence="1">Probably forms a complex composed of NirD, NirL, NirG and NirH. All proteins are required for the total conversion of siroheme to didecarboxysiroheme.</text>
</comment>
<comment type="disruption phenotype">
    <text evidence="2">The nirDLGH mutant lacks dissimilatory nitrite reductase (NIR) activity. The NIR activity is restored by adding purified heme d1.</text>
</comment>
<comment type="similarity">
    <text evidence="4">Belongs to the Ahb/Nir family.</text>
</comment>
<sequence length="150" mass="17017">MDDLSRRLLARYQKGLPICAEPYRRMAETLGCSEAEVLERLRRLEADGALSRVGPVLRHQRAGASTLAALAVPEERLQRVAERISQYAEVNHNYQREHRYNLWFVLTAGDRAQLDRVLAEIAADTGLQPLDLPMQEAYCIDLAFPLEASR</sequence>
<gene>
    <name evidence="3" type="primary">nirD</name>
    <name type="ordered locus">PA0515</name>
</gene>
<proteinExistence type="inferred from homology"/>
<keyword id="KW-0456">Lyase</keyword>
<keyword id="KW-1185">Reference proteome</keyword>
<evidence type="ECO:0000250" key="1">
    <source>
        <dbReference type="UniProtKB" id="I6UH61"/>
    </source>
</evidence>
<evidence type="ECO:0000269" key="2">
    <source>
    </source>
</evidence>
<evidence type="ECO:0000303" key="3">
    <source>
    </source>
</evidence>
<evidence type="ECO:0000305" key="4"/>
<evidence type="ECO:0000305" key="5">
    <source>
    </source>
</evidence>
<organism>
    <name type="scientific">Pseudomonas aeruginosa (strain ATCC 15692 / DSM 22644 / CIP 104116 / JCM 14847 / LMG 12228 / 1C / PRS 101 / PAO1)</name>
    <dbReference type="NCBI Taxonomy" id="208964"/>
    <lineage>
        <taxon>Bacteria</taxon>
        <taxon>Pseudomonadati</taxon>
        <taxon>Pseudomonadota</taxon>
        <taxon>Gammaproteobacteria</taxon>
        <taxon>Pseudomonadales</taxon>
        <taxon>Pseudomonadaceae</taxon>
        <taxon>Pseudomonas</taxon>
    </lineage>
</organism>
<accession>P95412</accession>
<accession>Q7DCL2</accession>
<dbReference type="EC" id="4.1.1.111" evidence="1"/>
<dbReference type="EMBL" id="D84475">
    <property type="protein sequence ID" value="BAA12677.1"/>
    <property type="molecule type" value="Genomic_DNA"/>
</dbReference>
<dbReference type="EMBL" id="AE004091">
    <property type="protein sequence ID" value="AAG03904.1"/>
    <property type="molecule type" value="Genomic_DNA"/>
</dbReference>
<dbReference type="PIR" id="G83581">
    <property type="entry name" value="G83581"/>
</dbReference>
<dbReference type="PIR" id="PC4131">
    <property type="entry name" value="PC4131"/>
</dbReference>
<dbReference type="RefSeq" id="NP_249206.1">
    <property type="nucleotide sequence ID" value="NC_002516.2"/>
</dbReference>
<dbReference type="RefSeq" id="WP_003084864.1">
    <property type="nucleotide sequence ID" value="NZ_QZGE01000010.1"/>
</dbReference>
<dbReference type="SMR" id="P95412"/>
<dbReference type="STRING" id="208964.PA0515"/>
<dbReference type="PaxDb" id="208964-PA0515"/>
<dbReference type="DNASU" id="879538"/>
<dbReference type="GeneID" id="879538"/>
<dbReference type="KEGG" id="pae:PA0515"/>
<dbReference type="PATRIC" id="fig|208964.12.peg.545"/>
<dbReference type="PseudoCAP" id="PA0515"/>
<dbReference type="HOGENOM" id="CLU_112007_1_0_6"/>
<dbReference type="InParanoid" id="P95412"/>
<dbReference type="OrthoDB" id="9806536at2"/>
<dbReference type="PhylomeDB" id="P95412"/>
<dbReference type="BioCyc" id="PAER208964:G1FZ6-520-MONOMER"/>
<dbReference type="Proteomes" id="UP000002438">
    <property type="component" value="Chromosome"/>
</dbReference>
<dbReference type="GO" id="GO:0016829">
    <property type="term" value="F:lyase activity"/>
    <property type="evidence" value="ECO:0007669"/>
    <property type="project" value="UniProtKB-KW"/>
</dbReference>
<dbReference type="Gene3D" id="3.30.70.3460">
    <property type="match status" value="1"/>
</dbReference>
<dbReference type="Gene3D" id="1.10.10.10">
    <property type="entry name" value="Winged helix-like DNA-binding domain superfamily/Winged helix DNA-binding domain"/>
    <property type="match status" value="1"/>
</dbReference>
<dbReference type="InterPro" id="IPR040523">
    <property type="entry name" value="AsnC_trans_reg2"/>
</dbReference>
<dbReference type="InterPro" id="IPR050684">
    <property type="entry name" value="HTH-Siroheme_Decarb"/>
</dbReference>
<dbReference type="InterPro" id="IPR053953">
    <property type="entry name" value="NirdL-like_HTH"/>
</dbReference>
<dbReference type="InterPro" id="IPR019888">
    <property type="entry name" value="Tscrpt_reg_AsnC-like"/>
</dbReference>
<dbReference type="InterPro" id="IPR036388">
    <property type="entry name" value="WH-like_DNA-bd_sf"/>
</dbReference>
<dbReference type="PANTHER" id="PTHR43413:SF1">
    <property type="entry name" value="SIROHEME DECARBOXYLASE NIRL SUBUNIT"/>
    <property type="match status" value="1"/>
</dbReference>
<dbReference type="PANTHER" id="PTHR43413">
    <property type="entry name" value="TRANSCRIPTIONAL REGULATOR, ASNC FAMILY"/>
    <property type="match status" value="1"/>
</dbReference>
<dbReference type="Pfam" id="PF17805">
    <property type="entry name" value="AsnC_trans_reg2"/>
    <property type="match status" value="1"/>
</dbReference>
<dbReference type="Pfam" id="PF22451">
    <property type="entry name" value="NirdL-like_HTH"/>
    <property type="match status" value="1"/>
</dbReference>
<dbReference type="SMART" id="SM00344">
    <property type="entry name" value="HTH_ASNC"/>
    <property type="match status" value="1"/>
</dbReference>
<name>NIRD_PSEAE</name>
<feature type="chain" id="PRO_0000287793" description="Siroheme decarboxylase NirD subunit">
    <location>
        <begin position="1"/>
        <end position="150"/>
    </location>
</feature>